<keyword id="KW-0227">DNA damage</keyword>
<keyword id="KW-0234">DNA repair</keyword>
<keyword id="KW-0235">DNA replication</keyword>
<keyword id="KW-0436">Ligase</keyword>
<keyword id="KW-0460">Magnesium</keyword>
<keyword id="KW-0464">Manganese</keyword>
<keyword id="KW-0479">Metal-binding</keyword>
<keyword id="KW-0520">NAD</keyword>
<keyword id="KW-0862">Zinc</keyword>
<proteinExistence type="inferred from homology"/>
<reference key="1">
    <citation type="journal article" date="2010" name="Genome Biol.">
        <title>Structure and dynamics of the pan-genome of Streptococcus pneumoniae and closely related species.</title>
        <authorList>
            <person name="Donati C."/>
            <person name="Hiller N.L."/>
            <person name="Tettelin H."/>
            <person name="Muzzi A."/>
            <person name="Croucher N.J."/>
            <person name="Angiuoli S.V."/>
            <person name="Oggioni M."/>
            <person name="Dunning Hotopp J.C."/>
            <person name="Hu F.Z."/>
            <person name="Riley D.R."/>
            <person name="Covacci A."/>
            <person name="Mitchell T.J."/>
            <person name="Bentley S.D."/>
            <person name="Kilian M."/>
            <person name="Ehrlich G.D."/>
            <person name="Rappuoli R."/>
            <person name="Moxon E.R."/>
            <person name="Masignani V."/>
        </authorList>
    </citation>
    <scope>NUCLEOTIDE SEQUENCE [LARGE SCALE GENOMIC DNA]</scope>
    <source>
        <strain>Hungary19A-6</strain>
    </source>
</reference>
<name>DNLJ_STRPI</name>
<accession>B1IBQ3</accession>
<gene>
    <name evidence="1" type="primary">ligA</name>
    <name type="ordered locus">SPH_1210</name>
</gene>
<comment type="function">
    <text evidence="1">DNA ligase that catalyzes the formation of phosphodiester linkages between 5'-phosphoryl and 3'-hydroxyl groups in double-stranded DNA using NAD as a coenzyme and as the energy source for the reaction. It is essential for DNA replication and repair of damaged DNA.</text>
</comment>
<comment type="catalytic activity">
    <reaction evidence="1">
        <text>NAD(+) + (deoxyribonucleotide)n-3'-hydroxyl + 5'-phospho-(deoxyribonucleotide)m = (deoxyribonucleotide)n+m + AMP + beta-nicotinamide D-nucleotide.</text>
        <dbReference type="EC" id="6.5.1.2"/>
    </reaction>
</comment>
<comment type="cofactor">
    <cofactor evidence="1">
        <name>Mg(2+)</name>
        <dbReference type="ChEBI" id="CHEBI:18420"/>
    </cofactor>
    <cofactor evidence="1">
        <name>Mn(2+)</name>
        <dbReference type="ChEBI" id="CHEBI:29035"/>
    </cofactor>
</comment>
<comment type="similarity">
    <text evidence="1">Belongs to the NAD-dependent DNA ligase family. LigA subfamily.</text>
</comment>
<sequence length="652" mass="72226">MNKRMNELVALLNRYATEYYTSDNPSVSDSEYDRLYRELVELETAYPEQVLADSPTHRVGGKVLDGFEKYSHQYPLYSLQDAFSREELDAFDARVRKEVAHPTYICELKIDGLSISLTYEKGILVAGVTRGDGSIGENITENLKRVKDIPLTLPEELDITVRGECYMPRASFDQVNQVRQENGEPEFANPRNAAAGTLRQLDTAVVAKRNLATFLYQEASPSTRDSQEKGLKYLEQLGFVVNPKRILAENIDEIWNFIQEVGQERENLPYDIDGVVIKVNDLVSQEELGFTVKAPKWAVAYKFPAEEKEAQLLSVDWTVGRTGVVTPTANLTPVQLAGTTVSRATLHNVDYIAEKDIRKDDTVIVYKAGDIIPAVLRVVESKRVSEEKLDIPTNCPSCNSDLLHFEDEVALRCINPRCPAQIMEGLIHFASRDAMNITGLGPSIVEKLFAANLVKDVADIYRLQEEDFLLLEGVKEKSAAKLYQAIQASKENSAEKLLFGLGIRHVGSKASQLLLQYFHSIENLSQADSEEVASIESLGGVIAKSLQTYFAAEGSEILLRELKETGVNLDYKGQTVVADAALSGLTVVLTGKLERLKRSEAKSKLESLGAKVTGSVSKKTDLVVVGADAGSKLQKAQELGIQVRDEAWLESL</sequence>
<protein>
    <recommendedName>
        <fullName evidence="1">DNA ligase</fullName>
        <ecNumber evidence="1">6.5.1.2</ecNumber>
    </recommendedName>
    <alternativeName>
        <fullName evidence="1">Polydeoxyribonucleotide synthase [NAD(+)]</fullName>
    </alternativeName>
</protein>
<evidence type="ECO:0000255" key="1">
    <source>
        <dbReference type="HAMAP-Rule" id="MF_01588"/>
    </source>
</evidence>
<dbReference type="EC" id="6.5.1.2" evidence="1"/>
<dbReference type="EMBL" id="CP000936">
    <property type="protein sequence ID" value="ACA37382.1"/>
    <property type="molecule type" value="Genomic_DNA"/>
</dbReference>
<dbReference type="RefSeq" id="WP_001042601.1">
    <property type="nucleotide sequence ID" value="NC_010380.1"/>
</dbReference>
<dbReference type="SMR" id="B1IBQ3"/>
<dbReference type="KEGG" id="spv:SPH_1210"/>
<dbReference type="HOGENOM" id="CLU_007764_2_1_9"/>
<dbReference type="Proteomes" id="UP000002163">
    <property type="component" value="Chromosome"/>
</dbReference>
<dbReference type="GO" id="GO:0005829">
    <property type="term" value="C:cytosol"/>
    <property type="evidence" value="ECO:0007669"/>
    <property type="project" value="TreeGrafter"/>
</dbReference>
<dbReference type="GO" id="GO:0003677">
    <property type="term" value="F:DNA binding"/>
    <property type="evidence" value="ECO:0007669"/>
    <property type="project" value="InterPro"/>
</dbReference>
<dbReference type="GO" id="GO:0003911">
    <property type="term" value="F:DNA ligase (NAD+) activity"/>
    <property type="evidence" value="ECO:0007669"/>
    <property type="project" value="UniProtKB-UniRule"/>
</dbReference>
<dbReference type="GO" id="GO:0046872">
    <property type="term" value="F:metal ion binding"/>
    <property type="evidence" value="ECO:0007669"/>
    <property type="project" value="UniProtKB-KW"/>
</dbReference>
<dbReference type="GO" id="GO:0006281">
    <property type="term" value="P:DNA repair"/>
    <property type="evidence" value="ECO:0007669"/>
    <property type="project" value="UniProtKB-KW"/>
</dbReference>
<dbReference type="GO" id="GO:0006260">
    <property type="term" value="P:DNA replication"/>
    <property type="evidence" value="ECO:0007669"/>
    <property type="project" value="UniProtKB-KW"/>
</dbReference>
<dbReference type="CDD" id="cd17748">
    <property type="entry name" value="BRCT_DNA_ligase_like"/>
    <property type="match status" value="1"/>
</dbReference>
<dbReference type="CDD" id="cd00114">
    <property type="entry name" value="LIGANc"/>
    <property type="match status" value="1"/>
</dbReference>
<dbReference type="FunFam" id="1.10.150.20:FF:000006">
    <property type="entry name" value="DNA ligase"/>
    <property type="match status" value="1"/>
</dbReference>
<dbReference type="FunFam" id="1.10.150.20:FF:000007">
    <property type="entry name" value="DNA ligase"/>
    <property type="match status" value="1"/>
</dbReference>
<dbReference type="FunFam" id="1.10.287.610:FF:000002">
    <property type="entry name" value="DNA ligase"/>
    <property type="match status" value="1"/>
</dbReference>
<dbReference type="FunFam" id="2.40.50.140:FF:000012">
    <property type="entry name" value="DNA ligase"/>
    <property type="match status" value="1"/>
</dbReference>
<dbReference type="FunFam" id="3.30.470.30:FF:000001">
    <property type="entry name" value="DNA ligase"/>
    <property type="match status" value="1"/>
</dbReference>
<dbReference type="FunFam" id="3.40.50.10190:FF:000045">
    <property type="entry name" value="DNA ligase"/>
    <property type="match status" value="1"/>
</dbReference>
<dbReference type="Gene3D" id="6.20.10.30">
    <property type="match status" value="1"/>
</dbReference>
<dbReference type="Gene3D" id="1.10.150.20">
    <property type="entry name" value="5' to 3' exonuclease, C-terminal subdomain"/>
    <property type="match status" value="2"/>
</dbReference>
<dbReference type="Gene3D" id="3.40.50.10190">
    <property type="entry name" value="BRCT domain"/>
    <property type="match status" value="1"/>
</dbReference>
<dbReference type="Gene3D" id="3.30.470.30">
    <property type="entry name" value="DNA ligase/mRNA capping enzyme"/>
    <property type="match status" value="1"/>
</dbReference>
<dbReference type="Gene3D" id="1.10.287.610">
    <property type="entry name" value="Helix hairpin bin"/>
    <property type="match status" value="1"/>
</dbReference>
<dbReference type="Gene3D" id="2.40.50.140">
    <property type="entry name" value="Nucleic acid-binding proteins"/>
    <property type="match status" value="1"/>
</dbReference>
<dbReference type="HAMAP" id="MF_01588">
    <property type="entry name" value="DNA_ligase_A"/>
    <property type="match status" value="1"/>
</dbReference>
<dbReference type="InterPro" id="IPR001357">
    <property type="entry name" value="BRCT_dom"/>
</dbReference>
<dbReference type="InterPro" id="IPR036420">
    <property type="entry name" value="BRCT_dom_sf"/>
</dbReference>
<dbReference type="InterPro" id="IPR041663">
    <property type="entry name" value="DisA/LigA_HHH"/>
</dbReference>
<dbReference type="InterPro" id="IPR001679">
    <property type="entry name" value="DNA_ligase"/>
</dbReference>
<dbReference type="InterPro" id="IPR018239">
    <property type="entry name" value="DNA_ligase_AS"/>
</dbReference>
<dbReference type="InterPro" id="IPR033136">
    <property type="entry name" value="DNA_ligase_CS"/>
</dbReference>
<dbReference type="InterPro" id="IPR013839">
    <property type="entry name" value="DNAligase_adenylation"/>
</dbReference>
<dbReference type="InterPro" id="IPR013840">
    <property type="entry name" value="DNAligase_N"/>
</dbReference>
<dbReference type="InterPro" id="IPR003583">
    <property type="entry name" value="Hlx-hairpin-Hlx_DNA-bd_motif"/>
</dbReference>
<dbReference type="InterPro" id="IPR012340">
    <property type="entry name" value="NA-bd_OB-fold"/>
</dbReference>
<dbReference type="InterPro" id="IPR004150">
    <property type="entry name" value="NAD_DNA_ligase_OB"/>
</dbReference>
<dbReference type="InterPro" id="IPR010994">
    <property type="entry name" value="RuvA_2-like"/>
</dbReference>
<dbReference type="InterPro" id="IPR004149">
    <property type="entry name" value="Znf_DNAligase_C4"/>
</dbReference>
<dbReference type="NCBIfam" id="TIGR00575">
    <property type="entry name" value="dnlj"/>
    <property type="match status" value="1"/>
</dbReference>
<dbReference type="NCBIfam" id="NF005932">
    <property type="entry name" value="PRK07956.1"/>
    <property type="match status" value="1"/>
</dbReference>
<dbReference type="PANTHER" id="PTHR23389">
    <property type="entry name" value="CHROMOSOME TRANSMISSION FIDELITY FACTOR 18"/>
    <property type="match status" value="1"/>
</dbReference>
<dbReference type="PANTHER" id="PTHR23389:SF9">
    <property type="entry name" value="DNA LIGASE"/>
    <property type="match status" value="1"/>
</dbReference>
<dbReference type="Pfam" id="PF00533">
    <property type="entry name" value="BRCT"/>
    <property type="match status" value="1"/>
</dbReference>
<dbReference type="Pfam" id="PF01653">
    <property type="entry name" value="DNA_ligase_aden"/>
    <property type="match status" value="1"/>
</dbReference>
<dbReference type="Pfam" id="PF03120">
    <property type="entry name" value="DNA_ligase_OB"/>
    <property type="match status" value="1"/>
</dbReference>
<dbReference type="Pfam" id="PF03119">
    <property type="entry name" value="DNA_ligase_ZBD"/>
    <property type="match status" value="1"/>
</dbReference>
<dbReference type="Pfam" id="PF12826">
    <property type="entry name" value="HHH_2"/>
    <property type="match status" value="1"/>
</dbReference>
<dbReference type="Pfam" id="PF14520">
    <property type="entry name" value="HHH_5"/>
    <property type="match status" value="1"/>
</dbReference>
<dbReference type="PIRSF" id="PIRSF001604">
    <property type="entry name" value="LigA"/>
    <property type="match status" value="1"/>
</dbReference>
<dbReference type="SMART" id="SM00292">
    <property type="entry name" value="BRCT"/>
    <property type="match status" value="1"/>
</dbReference>
<dbReference type="SMART" id="SM00278">
    <property type="entry name" value="HhH1"/>
    <property type="match status" value="2"/>
</dbReference>
<dbReference type="SMART" id="SM00532">
    <property type="entry name" value="LIGANc"/>
    <property type="match status" value="1"/>
</dbReference>
<dbReference type="SUPFAM" id="SSF52113">
    <property type="entry name" value="BRCT domain"/>
    <property type="match status" value="1"/>
</dbReference>
<dbReference type="SUPFAM" id="SSF56091">
    <property type="entry name" value="DNA ligase/mRNA capping enzyme, catalytic domain"/>
    <property type="match status" value="1"/>
</dbReference>
<dbReference type="SUPFAM" id="SSF50249">
    <property type="entry name" value="Nucleic acid-binding proteins"/>
    <property type="match status" value="1"/>
</dbReference>
<dbReference type="SUPFAM" id="SSF47781">
    <property type="entry name" value="RuvA domain 2-like"/>
    <property type="match status" value="1"/>
</dbReference>
<dbReference type="PROSITE" id="PS50172">
    <property type="entry name" value="BRCT"/>
    <property type="match status" value="1"/>
</dbReference>
<dbReference type="PROSITE" id="PS01055">
    <property type="entry name" value="DNA_LIGASE_N1"/>
    <property type="match status" value="1"/>
</dbReference>
<dbReference type="PROSITE" id="PS01056">
    <property type="entry name" value="DNA_LIGASE_N2"/>
    <property type="match status" value="1"/>
</dbReference>
<feature type="chain" id="PRO_0000380481" description="DNA ligase">
    <location>
        <begin position="1"/>
        <end position="652"/>
    </location>
</feature>
<feature type="domain" description="BRCT" evidence="1">
    <location>
        <begin position="577"/>
        <end position="652"/>
    </location>
</feature>
<feature type="active site" description="N6-AMP-lysine intermediate" evidence="1">
    <location>
        <position position="109"/>
    </location>
</feature>
<feature type="binding site" evidence="1">
    <location>
        <begin position="29"/>
        <end position="33"/>
    </location>
    <ligand>
        <name>NAD(+)</name>
        <dbReference type="ChEBI" id="CHEBI:57540"/>
    </ligand>
</feature>
<feature type="binding site" evidence="1">
    <location>
        <begin position="78"/>
        <end position="79"/>
    </location>
    <ligand>
        <name>NAD(+)</name>
        <dbReference type="ChEBI" id="CHEBI:57540"/>
    </ligand>
</feature>
<feature type="binding site" evidence="1">
    <location>
        <position position="107"/>
    </location>
    <ligand>
        <name>NAD(+)</name>
        <dbReference type="ChEBI" id="CHEBI:57540"/>
    </ligand>
</feature>
<feature type="binding site" evidence="1">
    <location>
        <position position="130"/>
    </location>
    <ligand>
        <name>NAD(+)</name>
        <dbReference type="ChEBI" id="CHEBI:57540"/>
    </ligand>
</feature>
<feature type="binding site" evidence="1">
    <location>
        <position position="164"/>
    </location>
    <ligand>
        <name>NAD(+)</name>
        <dbReference type="ChEBI" id="CHEBI:57540"/>
    </ligand>
</feature>
<feature type="binding site" evidence="1">
    <location>
        <position position="278"/>
    </location>
    <ligand>
        <name>NAD(+)</name>
        <dbReference type="ChEBI" id="CHEBI:57540"/>
    </ligand>
</feature>
<feature type="binding site" evidence="1">
    <location>
        <position position="302"/>
    </location>
    <ligand>
        <name>NAD(+)</name>
        <dbReference type="ChEBI" id="CHEBI:57540"/>
    </ligand>
</feature>
<feature type="binding site" evidence="1">
    <location>
        <position position="395"/>
    </location>
    <ligand>
        <name>Zn(2+)</name>
        <dbReference type="ChEBI" id="CHEBI:29105"/>
    </ligand>
</feature>
<feature type="binding site" evidence="1">
    <location>
        <position position="398"/>
    </location>
    <ligand>
        <name>Zn(2+)</name>
        <dbReference type="ChEBI" id="CHEBI:29105"/>
    </ligand>
</feature>
<feature type="binding site" evidence="1">
    <location>
        <position position="413"/>
    </location>
    <ligand>
        <name>Zn(2+)</name>
        <dbReference type="ChEBI" id="CHEBI:29105"/>
    </ligand>
</feature>
<feature type="binding site" evidence="1">
    <location>
        <position position="418"/>
    </location>
    <ligand>
        <name>Zn(2+)</name>
        <dbReference type="ChEBI" id="CHEBI:29105"/>
    </ligand>
</feature>
<organism>
    <name type="scientific">Streptococcus pneumoniae (strain Hungary19A-6)</name>
    <dbReference type="NCBI Taxonomy" id="487214"/>
    <lineage>
        <taxon>Bacteria</taxon>
        <taxon>Bacillati</taxon>
        <taxon>Bacillota</taxon>
        <taxon>Bacilli</taxon>
        <taxon>Lactobacillales</taxon>
        <taxon>Streptococcaceae</taxon>
        <taxon>Streptococcus</taxon>
    </lineage>
</organism>